<feature type="chain" id="PRO_0000320591" description="Probable ubiquitin carboxyl-terminal hydrolase MINDY-4">
    <location>
        <begin position="1"/>
        <end position="744"/>
    </location>
</feature>
<feature type="region of interest" description="Disordered" evidence="4">
    <location>
        <begin position="211"/>
        <end position="358"/>
    </location>
</feature>
<feature type="compositionally biased region" description="Low complexity" evidence="4">
    <location>
        <begin position="265"/>
        <end position="277"/>
    </location>
</feature>
<feature type="compositionally biased region" description="Polar residues" evidence="4">
    <location>
        <begin position="290"/>
        <end position="299"/>
    </location>
</feature>
<feature type="compositionally biased region" description="Basic and acidic residues" evidence="4">
    <location>
        <begin position="300"/>
        <end position="310"/>
    </location>
</feature>
<feature type="active site" description="Nucleophile" evidence="2">
    <location>
        <position position="443"/>
    </location>
</feature>
<feature type="active site" description="Proton acceptor" evidence="2">
    <location>
        <position position="664"/>
    </location>
</feature>
<feature type="modified residue" description="Phosphoserine" evidence="7">
    <location>
        <position position="143"/>
    </location>
</feature>
<feature type="modified residue" description="Phosphoserine" evidence="1">
    <location>
        <position position="220"/>
    </location>
</feature>
<feature type="modified residue" description="Phosphoserine" evidence="1">
    <location>
        <position position="224"/>
    </location>
</feature>
<feature type="modified residue" description="Phosphoserine" evidence="1">
    <location>
        <position position="295"/>
    </location>
</feature>
<feature type="splice variant" id="VSP_031672" description="In isoform 2." evidence="5">
    <location>
        <begin position="506"/>
        <end position="744"/>
    </location>
</feature>
<gene>
    <name type="primary">Mindy4</name>
    <name type="synonym">Fam188b</name>
</gene>
<accession>Q3UQI9</accession>
<accession>Q8C472</accession>
<comment type="function">
    <text evidence="3">Probable hydrolase that can remove 'Lys-48'-linked conjugated ubiquitin from proteins.</text>
</comment>
<comment type="catalytic activity">
    <reaction evidence="3">
        <text>Thiol-dependent hydrolysis of ester, thioester, amide, peptide and isopeptide bonds formed by the C-terminal Gly of ubiquitin (a 76-residue protein attached to proteins as an intracellular targeting signal).</text>
        <dbReference type="EC" id="3.4.19.12"/>
    </reaction>
</comment>
<comment type="alternative products">
    <event type="alternative splicing"/>
    <isoform>
        <id>Q3UQI9-1</id>
        <name>1</name>
        <sequence type="displayed"/>
    </isoform>
    <isoform>
        <id>Q3UQI9-2</id>
        <name>2</name>
        <sequence type="described" ref="VSP_031672"/>
    </isoform>
</comment>
<comment type="similarity">
    <text evidence="6">Belongs to the MINDY deubiquitinase family. FAM188 subfamily.</text>
</comment>
<sequence>MDSLYVEEVAASLVREFLSRKGLNKTFVTMDQERPRCELSINSRNDLRKVLHLEFLYKENKAKEKPLRTNLELITRYFLDNVGNTDNSESQEVPIPAIPVPKKNNKLPLRHSETTLVNIYDLSDEDTGRRTSWSEAGKARHDSLDGDILGNFVSSKKPSHKSKAAHVDLGDSLPLVPAWEKVDQLHSSEPGIDVKKTMERTRPKSGLIVRGMMAGPVASSPQDSFRKRSLRRSSALSRKLQTPEEIQQQSEPFVHTPAYLGPQEVPDSSSDSVSRSPLGQLNELSIEKPNVTSSSQGLSQRDRPRLRSVSEDSPLGYSHTEGNSRMAQDQLERAFKRQGVQPPSLRKNQLVSDRTDDKPDALQLEDVEDELIKEDIVLFPPPSMLKLQTVSKPIDLSLAKEIKTLLFGSTFCCFSEEWKLQNFSFNDIASLKYGIVQNKGGPCGVLAAVQGCVLQKLLFEGDNRTNSNLRLQPSDAQRTRCLALAIADILWRAGGKEQAVVALASGTPHFSPTGKYKADGVLETLTLYSLTSSEDLVTFIQQSVHQFEAGPYGCILLTLSAILSRSLELVRQDFDVPTSHLIGAHGYCTQELVNLLLTGRAVSNVFNDVVELDSGDGNITLLRGIEARSDIGFLSLFEHYNVCQVGCFLKTPRFPIWVVCSESHFSILFSLQPELLCDWRSERLFDLYYYDGLANQQEEIRLTVDTTKTAPADSCSDLVPPLELCIRTKWKGASVNWNGSDPIL</sequence>
<organism>
    <name type="scientific">Mus musculus</name>
    <name type="common">Mouse</name>
    <dbReference type="NCBI Taxonomy" id="10090"/>
    <lineage>
        <taxon>Eukaryota</taxon>
        <taxon>Metazoa</taxon>
        <taxon>Chordata</taxon>
        <taxon>Craniata</taxon>
        <taxon>Vertebrata</taxon>
        <taxon>Euteleostomi</taxon>
        <taxon>Mammalia</taxon>
        <taxon>Eutheria</taxon>
        <taxon>Euarchontoglires</taxon>
        <taxon>Glires</taxon>
        <taxon>Rodentia</taxon>
        <taxon>Myomorpha</taxon>
        <taxon>Muroidea</taxon>
        <taxon>Muridae</taxon>
        <taxon>Murinae</taxon>
        <taxon>Mus</taxon>
        <taxon>Mus</taxon>
    </lineage>
</organism>
<evidence type="ECO:0000250" key="1">
    <source>
        <dbReference type="UniProtKB" id="Q4G0A6"/>
    </source>
</evidence>
<evidence type="ECO:0000250" key="2">
    <source>
        <dbReference type="UniProtKB" id="Q8N5J2"/>
    </source>
</evidence>
<evidence type="ECO:0000250" key="3">
    <source>
        <dbReference type="UniProtKB" id="Q8NBR6"/>
    </source>
</evidence>
<evidence type="ECO:0000256" key="4">
    <source>
        <dbReference type="SAM" id="MobiDB-lite"/>
    </source>
</evidence>
<evidence type="ECO:0000303" key="5">
    <source>
    </source>
</evidence>
<evidence type="ECO:0000305" key="6"/>
<evidence type="ECO:0007744" key="7">
    <source>
    </source>
</evidence>
<name>MINY4_MOUSE</name>
<keyword id="KW-0025">Alternative splicing</keyword>
<keyword id="KW-0378">Hydrolase</keyword>
<keyword id="KW-0597">Phosphoprotein</keyword>
<keyword id="KW-0645">Protease</keyword>
<keyword id="KW-1185">Reference proteome</keyword>
<keyword id="KW-0788">Thiol protease</keyword>
<keyword id="KW-0833">Ubl conjugation pathway</keyword>
<dbReference type="EC" id="3.4.19.12"/>
<dbReference type="EMBL" id="AK082855">
    <property type="protein sequence ID" value="BAC38655.1"/>
    <property type="molecule type" value="mRNA"/>
</dbReference>
<dbReference type="EMBL" id="AK142385">
    <property type="protein sequence ID" value="BAE25052.1"/>
    <property type="molecule type" value="mRNA"/>
</dbReference>
<dbReference type="CCDS" id="CCDS51782.1">
    <molecule id="Q3UQI9-1"/>
</dbReference>
<dbReference type="RefSeq" id="NP_001136253.1">
    <molecule id="Q3UQI9-1"/>
    <property type="nucleotide sequence ID" value="NM_001142781.1"/>
</dbReference>
<dbReference type="RefSeq" id="NP_808551.2">
    <property type="nucleotide sequence ID" value="NM_177883.4"/>
</dbReference>
<dbReference type="BioGRID" id="236942">
    <property type="interactions" value="1"/>
</dbReference>
<dbReference type="FunCoup" id="Q3UQI9">
    <property type="interactions" value="45"/>
</dbReference>
<dbReference type="STRING" id="10090.ENSMUSP00000061221"/>
<dbReference type="iPTMnet" id="Q3UQI9"/>
<dbReference type="PhosphoSitePlus" id="Q3UQI9"/>
<dbReference type="jPOST" id="Q3UQI9"/>
<dbReference type="PaxDb" id="10090-ENSMUSP00000061221"/>
<dbReference type="ProteomicsDB" id="252565">
    <molecule id="Q3UQI9-1"/>
</dbReference>
<dbReference type="ProteomicsDB" id="252566">
    <molecule id="Q3UQI9-2"/>
</dbReference>
<dbReference type="Pumba" id="Q3UQI9"/>
<dbReference type="Antibodypedia" id="3440">
    <property type="antibodies" value="38 antibodies from 13 providers"/>
</dbReference>
<dbReference type="Ensembl" id="ENSMUST00000053094.8">
    <molecule id="Q3UQI9-1"/>
    <property type="protein sequence ID" value="ENSMUSP00000061221.8"/>
    <property type="gene ID" value="ENSMUSG00000038022.12"/>
</dbReference>
<dbReference type="GeneID" id="330323"/>
<dbReference type="KEGG" id="mmu:330323"/>
<dbReference type="UCSC" id="uc009cao.1">
    <molecule id="Q3UQI9-1"/>
    <property type="organism name" value="mouse"/>
</dbReference>
<dbReference type="AGR" id="MGI:3583959"/>
<dbReference type="CTD" id="84182"/>
<dbReference type="MGI" id="MGI:3583959">
    <property type="gene designation" value="Mindy4"/>
</dbReference>
<dbReference type="VEuPathDB" id="HostDB:ENSMUSG00000038022"/>
<dbReference type="eggNOG" id="KOG2871">
    <property type="taxonomic scope" value="Eukaryota"/>
</dbReference>
<dbReference type="GeneTree" id="ENSGT00940000159600"/>
<dbReference type="HOGENOM" id="CLU_011769_1_0_1"/>
<dbReference type="InParanoid" id="Q3UQI9"/>
<dbReference type="OrthoDB" id="10263628at2759"/>
<dbReference type="PhylomeDB" id="Q3UQI9"/>
<dbReference type="TreeFam" id="TF323996"/>
<dbReference type="BioGRID-ORCS" id="330323">
    <property type="hits" value="5 hits in 77 CRISPR screens"/>
</dbReference>
<dbReference type="ChiTaRS" id="Fam188b">
    <property type="organism name" value="mouse"/>
</dbReference>
<dbReference type="PRO" id="PR:Q3UQI9"/>
<dbReference type="Proteomes" id="UP000000589">
    <property type="component" value="Chromosome 6"/>
</dbReference>
<dbReference type="RNAct" id="Q3UQI9">
    <property type="molecule type" value="protein"/>
</dbReference>
<dbReference type="Bgee" id="ENSMUSG00000038022">
    <property type="expression patterns" value="Expressed in molar tooth and 118 other cell types or tissues"/>
</dbReference>
<dbReference type="ExpressionAtlas" id="Q3UQI9">
    <property type="expression patterns" value="baseline and differential"/>
</dbReference>
<dbReference type="GO" id="GO:0004843">
    <property type="term" value="F:cysteine-type deubiquitinase activity"/>
    <property type="evidence" value="ECO:0007669"/>
    <property type="project" value="UniProtKB-EC"/>
</dbReference>
<dbReference type="GO" id="GO:1990380">
    <property type="term" value="F:K48-linked deubiquitinase activity"/>
    <property type="evidence" value="ECO:0007669"/>
    <property type="project" value="InterPro"/>
</dbReference>
<dbReference type="GO" id="GO:0071108">
    <property type="term" value="P:protein K48-linked deubiquitination"/>
    <property type="evidence" value="ECO:0007669"/>
    <property type="project" value="InterPro"/>
</dbReference>
<dbReference type="GO" id="GO:0006508">
    <property type="term" value="P:proteolysis"/>
    <property type="evidence" value="ECO:0007669"/>
    <property type="project" value="UniProtKB-KW"/>
</dbReference>
<dbReference type="InterPro" id="IPR025257">
    <property type="entry name" value="MINDY-3/4_CD"/>
</dbReference>
<dbReference type="InterPro" id="IPR039785">
    <property type="entry name" value="MINY3/4"/>
</dbReference>
<dbReference type="PANTHER" id="PTHR12473">
    <property type="entry name" value="UBIQUITIN CARBOXYL-TERMINAL HYDROLASE MINDY-4-RELATED"/>
    <property type="match status" value="1"/>
</dbReference>
<dbReference type="PANTHER" id="PTHR12473:SF8">
    <property type="entry name" value="UBIQUITIN CARBOXYL-TERMINAL HYDROLASE MINDY-4-RELATED"/>
    <property type="match status" value="1"/>
</dbReference>
<dbReference type="Pfam" id="PF13898">
    <property type="entry name" value="MINDY-3_4_CD"/>
    <property type="match status" value="1"/>
</dbReference>
<dbReference type="SMART" id="SM01174">
    <property type="entry name" value="DUF4205"/>
    <property type="match status" value="1"/>
</dbReference>
<proteinExistence type="evidence at protein level"/>
<reference key="1">
    <citation type="journal article" date="2005" name="Science">
        <title>The transcriptional landscape of the mammalian genome.</title>
        <authorList>
            <person name="Carninci P."/>
            <person name="Kasukawa T."/>
            <person name="Katayama S."/>
            <person name="Gough J."/>
            <person name="Frith M.C."/>
            <person name="Maeda N."/>
            <person name="Oyama R."/>
            <person name="Ravasi T."/>
            <person name="Lenhard B."/>
            <person name="Wells C."/>
            <person name="Kodzius R."/>
            <person name="Shimokawa K."/>
            <person name="Bajic V.B."/>
            <person name="Brenner S.E."/>
            <person name="Batalov S."/>
            <person name="Forrest A.R."/>
            <person name="Zavolan M."/>
            <person name="Davis M.J."/>
            <person name="Wilming L.G."/>
            <person name="Aidinis V."/>
            <person name="Allen J.E."/>
            <person name="Ambesi-Impiombato A."/>
            <person name="Apweiler R."/>
            <person name="Aturaliya R.N."/>
            <person name="Bailey T.L."/>
            <person name="Bansal M."/>
            <person name="Baxter L."/>
            <person name="Beisel K.W."/>
            <person name="Bersano T."/>
            <person name="Bono H."/>
            <person name="Chalk A.M."/>
            <person name="Chiu K.P."/>
            <person name="Choudhary V."/>
            <person name="Christoffels A."/>
            <person name="Clutterbuck D.R."/>
            <person name="Crowe M.L."/>
            <person name="Dalla E."/>
            <person name="Dalrymple B.P."/>
            <person name="de Bono B."/>
            <person name="Della Gatta G."/>
            <person name="di Bernardo D."/>
            <person name="Down T."/>
            <person name="Engstrom P."/>
            <person name="Fagiolini M."/>
            <person name="Faulkner G."/>
            <person name="Fletcher C.F."/>
            <person name="Fukushima T."/>
            <person name="Furuno M."/>
            <person name="Futaki S."/>
            <person name="Gariboldi M."/>
            <person name="Georgii-Hemming P."/>
            <person name="Gingeras T.R."/>
            <person name="Gojobori T."/>
            <person name="Green R.E."/>
            <person name="Gustincich S."/>
            <person name="Harbers M."/>
            <person name="Hayashi Y."/>
            <person name="Hensch T.K."/>
            <person name="Hirokawa N."/>
            <person name="Hill D."/>
            <person name="Huminiecki L."/>
            <person name="Iacono M."/>
            <person name="Ikeo K."/>
            <person name="Iwama A."/>
            <person name="Ishikawa T."/>
            <person name="Jakt M."/>
            <person name="Kanapin A."/>
            <person name="Katoh M."/>
            <person name="Kawasawa Y."/>
            <person name="Kelso J."/>
            <person name="Kitamura H."/>
            <person name="Kitano H."/>
            <person name="Kollias G."/>
            <person name="Krishnan S.P."/>
            <person name="Kruger A."/>
            <person name="Kummerfeld S.K."/>
            <person name="Kurochkin I.V."/>
            <person name="Lareau L.F."/>
            <person name="Lazarevic D."/>
            <person name="Lipovich L."/>
            <person name="Liu J."/>
            <person name="Liuni S."/>
            <person name="McWilliam S."/>
            <person name="Madan Babu M."/>
            <person name="Madera M."/>
            <person name="Marchionni L."/>
            <person name="Matsuda H."/>
            <person name="Matsuzawa S."/>
            <person name="Miki H."/>
            <person name="Mignone F."/>
            <person name="Miyake S."/>
            <person name="Morris K."/>
            <person name="Mottagui-Tabar S."/>
            <person name="Mulder N."/>
            <person name="Nakano N."/>
            <person name="Nakauchi H."/>
            <person name="Ng P."/>
            <person name="Nilsson R."/>
            <person name="Nishiguchi S."/>
            <person name="Nishikawa S."/>
            <person name="Nori F."/>
            <person name="Ohara O."/>
            <person name="Okazaki Y."/>
            <person name="Orlando V."/>
            <person name="Pang K.C."/>
            <person name="Pavan W.J."/>
            <person name="Pavesi G."/>
            <person name="Pesole G."/>
            <person name="Petrovsky N."/>
            <person name="Piazza S."/>
            <person name="Reed J."/>
            <person name="Reid J.F."/>
            <person name="Ring B.Z."/>
            <person name="Ringwald M."/>
            <person name="Rost B."/>
            <person name="Ruan Y."/>
            <person name="Salzberg S.L."/>
            <person name="Sandelin A."/>
            <person name="Schneider C."/>
            <person name="Schoenbach C."/>
            <person name="Sekiguchi K."/>
            <person name="Semple C.A."/>
            <person name="Seno S."/>
            <person name="Sessa L."/>
            <person name="Sheng Y."/>
            <person name="Shibata Y."/>
            <person name="Shimada H."/>
            <person name="Shimada K."/>
            <person name="Silva D."/>
            <person name="Sinclair B."/>
            <person name="Sperling S."/>
            <person name="Stupka E."/>
            <person name="Sugiura K."/>
            <person name="Sultana R."/>
            <person name="Takenaka Y."/>
            <person name="Taki K."/>
            <person name="Tammoja K."/>
            <person name="Tan S.L."/>
            <person name="Tang S."/>
            <person name="Taylor M.S."/>
            <person name="Tegner J."/>
            <person name="Teichmann S.A."/>
            <person name="Ueda H.R."/>
            <person name="van Nimwegen E."/>
            <person name="Verardo R."/>
            <person name="Wei C.L."/>
            <person name="Yagi K."/>
            <person name="Yamanishi H."/>
            <person name="Zabarovsky E."/>
            <person name="Zhu S."/>
            <person name="Zimmer A."/>
            <person name="Hide W."/>
            <person name="Bult C."/>
            <person name="Grimmond S.M."/>
            <person name="Teasdale R.D."/>
            <person name="Liu E.T."/>
            <person name="Brusic V."/>
            <person name="Quackenbush J."/>
            <person name="Wahlestedt C."/>
            <person name="Mattick J.S."/>
            <person name="Hume D.A."/>
            <person name="Kai C."/>
            <person name="Sasaki D."/>
            <person name="Tomaru Y."/>
            <person name="Fukuda S."/>
            <person name="Kanamori-Katayama M."/>
            <person name="Suzuki M."/>
            <person name="Aoki J."/>
            <person name="Arakawa T."/>
            <person name="Iida J."/>
            <person name="Imamura K."/>
            <person name="Itoh M."/>
            <person name="Kato T."/>
            <person name="Kawaji H."/>
            <person name="Kawagashira N."/>
            <person name="Kawashima T."/>
            <person name="Kojima M."/>
            <person name="Kondo S."/>
            <person name="Konno H."/>
            <person name="Nakano K."/>
            <person name="Ninomiya N."/>
            <person name="Nishio T."/>
            <person name="Okada M."/>
            <person name="Plessy C."/>
            <person name="Shibata K."/>
            <person name="Shiraki T."/>
            <person name="Suzuki S."/>
            <person name="Tagami M."/>
            <person name="Waki K."/>
            <person name="Watahiki A."/>
            <person name="Okamura-Oho Y."/>
            <person name="Suzuki H."/>
            <person name="Kawai J."/>
            <person name="Hayashizaki Y."/>
        </authorList>
    </citation>
    <scope>NUCLEOTIDE SEQUENCE [LARGE SCALE MRNA] (ISOFORMS 1 AND 2)</scope>
    <source>
        <strain>C57BL/6J</strain>
        <tissue>Lung</tissue>
    </source>
</reference>
<reference key="2">
    <citation type="journal article" date="2010" name="Cell">
        <title>A tissue-specific atlas of mouse protein phosphorylation and expression.</title>
        <authorList>
            <person name="Huttlin E.L."/>
            <person name="Jedrychowski M.P."/>
            <person name="Elias J.E."/>
            <person name="Goswami T."/>
            <person name="Rad R."/>
            <person name="Beausoleil S.A."/>
            <person name="Villen J."/>
            <person name="Haas W."/>
            <person name="Sowa M.E."/>
            <person name="Gygi S.P."/>
        </authorList>
    </citation>
    <scope>PHOSPHORYLATION [LARGE SCALE ANALYSIS] AT SER-143</scope>
    <scope>IDENTIFICATION BY MASS SPECTROMETRY [LARGE SCALE ANALYSIS]</scope>
    <source>
        <tissue>Brain</tissue>
        <tissue>Kidney</tissue>
        <tissue>Lung</tissue>
        <tissue>Testis</tissue>
    </source>
</reference>
<protein>
    <recommendedName>
        <fullName>Probable ubiquitin carboxyl-terminal hydrolase MINDY-4</fullName>
        <ecNumber>3.4.19.12</ecNumber>
    </recommendedName>
    <alternativeName>
        <fullName>Probable deubiquitinating enzyme MINDY-4</fullName>
    </alternativeName>
</protein>